<feature type="chain" id="PRO_0000218218" description="Putative glutamate--cysteine ligase 2">
    <location>
        <begin position="1"/>
        <end position="372"/>
    </location>
</feature>
<sequence>MPLPDFHVSEPFTLGIELEMQVVNPPGYDLSQDSSMLIDAVKNKITAGEVKHDITESMLELATDVCRDINQAAGQFSAMQKVVLQAAADHHLEICGGGTPPFQKWQRQEVCDNERYQRTLENFGYLIQQATVFGQHVHVGCASGDDAIYLLHGLSRFVPHFIALSAASPYMQGTDTRFAPSRPNIFSAFPDNGPMPWVSNWQQFEALFRCLSYTTMIDSIKDLHWDIRPSPHFGTVEVRVMDTPLTLSHAVNMAGLIQATAHWLLTERPFKHQEKDYLLYKFNRFQACRYGLEGVITDPHTGDRRPLTEDTLRLLEKIAPSAHKIGASSAIEALHRQVVSGLNEAQLMRDFVADGGSLIGLVKKHCEIWAGD</sequence>
<organism>
    <name type="scientific">Shigella flexneri</name>
    <dbReference type="NCBI Taxonomy" id="623"/>
    <lineage>
        <taxon>Bacteria</taxon>
        <taxon>Pseudomonadati</taxon>
        <taxon>Pseudomonadota</taxon>
        <taxon>Gammaproteobacteria</taxon>
        <taxon>Enterobacterales</taxon>
        <taxon>Enterobacteriaceae</taxon>
        <taxon>Shigella</taxon>
    </lineage>
</organism>
<protein>
    <recommendedName>
        <fullName evidence="1">Putative glutamate--cysteine ligase 2</fullName>
        <ecNumber evidence="1">6.3.2.2</ecNumber>
    </recommendedName>
    <alternativeName>
        <fullName evidence="1">Gamma-glutamylcysteine synthetase 2</fullName>
        <shortName evidence="1">GCS 2</shortName>
        <shortName evidence="1">Gamma-GCS 2</shortName>
    </alternativeName>
</protein>
<comment type="function">
    <text evidence="1">ATP-dependent carboxylate-amine ligase which exhibits weak glutamate--cysteine ligase activity.</text>
</comment>
<comment type="catalytic activity">
    <reaction evidence="1">
        <text>L-cysteine + L-glutamate + ATP = gamma-L-glutamyl-L-cysteine + ADP + phosphate + H(+)</text>
        <dbReference type="Rhea" id="RHEA:13285"/>
        <dbReference type="ChEBI" id="CHEBI:15378"/>
        <dbReference type="ChEBI" id="CHEBI:29985"/>
        <dbReference type="ChEBI" id="CHEBI:30616"/>
        <dbReference type="ChEBI" id="CHEBI:35235"/>
        <dbReference type="ChEBI" id="CHEBI:43474"/>
        <dbReference type="ChEBI" id="CHEBI:58173"/>
        <dbReference type="ChEBI" id="CHEBI:456216"/>
        <dbReference type="EC" id="6.3.2.2"/>
    </reaction>
</comment>
<comment type="subunit">
    <text evidence="1">Homodimer.</text>
</comment>
<comment type="similarity">
    <text evidence="1">Belongs to the glutamate--cysteine ligase type 2 family. YbdK subfamily.</text>
</comment>
<reference key="1">
    <citation type="journal article" date="2002" name="Nucleic Acids Res.">
        <title>Genome sequence of Shigella flexneri 2a: insights into pathogenicity through comparison with genomes of Escherichia coli K12 and O157.</title>
        <authorList>
            <person name="Jin Q."/>
            <person name="Yuan Z."/>
            <person name="Xu J."/>
            <person name="Wang Y."/>
            <person name="Shen Y."/>
            <person name="Lu W."/>
            <person name="Wang J."/>
            <person name="Liu H."/>
            <person name="Yang J."/>
            <person name="Yang F."/>
            <person name="Zhang X."/>
            <person name="Zhang J."/>
            <person name="Yang G."/>
            <person name="Wu H."/>
            <person name="Qu D."/>
            <person name="Dong J."/>
            <person name="Sun L."/>
            <person name="Xue Y."/>
            <person name="Zhao A."/>
            <person name="Gao Y."/>
            <person name="Zhu J."/>
            <person name="Kan B."/>
            <person name="Ding K."/>
            <person name="Chen S."/>
            <person name="Cheng H."/>
            <person name="Yao Z."/>
            <person name="He B."/>
            <person name="Chen R."/>
            <person name="Ma D."/>
            <person name="Qiang B."/>
            <person name="Wen Y."/>
            <person name="Hou Y."/>
            <person name="Yu J."/>
        </authorList>
    </citation>
    <scope>NUCLEOTIDE SEQUENCE [LARGE SCALE GENOMIC DNA]</scope>
    <source>
        <strain>301 / Serotype 2a</strain>
    </source>
</reference>
<reference key="2">
    <citation type="journal article" date="2003" name="Infect. Immun.">
        <title>Complete genome sequence and comparative genomics of Shigella flexneri serotype 2a strain 2457T.</title>
        <authorList>
            <person name="Wei J."/>
            <person name="Goldberg M.B."/>
            <person name="Burland V."/>
            <person name="Venkatesan M.M."/>
            <person name="Deng W."/>
            <person name="Fournier G."/>
            <person name="Mayhew G.F."/>
            <person name="Plunkett G. III"/>
            <person name="Rose D.J."/>
            <person name="Darling A."/>
            <person name="Mau B."/>
            <person name="Perna N.T."/>
            <person name="Payne S.M."/>
            <person name="Runyen-Janecky L.J."/>
            <person name="Zhou S."/>
            <person name="Schwartz D.C."/>
            <person name="Blattner F.R."/>
        </authorList>
    </citation>
    <scope>NUCLEOTIDE SEQUENCE [LARGE SCALE GENOMIC DNA]</scope>
    <source>
        <strain>ATCC 700930 / 2457T / Serotype 2a</strain>
    </source>
</reference>
<proteinExistence type="inferred from homology"/>
<gene>
    <name type="primary">ybdK</name>
    <name type="ordered locus">SF0488</name>
    <name type="ordered locus">S0496</name>
</gene>
<accession>Q83M14</accession>
<accession>Q7C2T3</accession>
<evidence type="ECO:0000255" key="1">
    <source>
        <dbReference type="HAMAP-Rule" id="MF_01609"/>
    </source>
</evidence>
<name>GCS2_SHIFL</name>
<dbReference type="EC" id="6.3.2.2" evidence="1"/>
<dbReference type="EMBL" id="AE005674">
    <property type="protein sequence ID" value="AAN42138.1"/>
    <property type="molecule type" value="Genomic_DNA"/>
</dbReference>
<dbReference type="EMBL" id="AE014073">
    <property type="protein sequence ID" value="AAP16012.1"/>
    <property type="molecule type" value="Genomic_DNA"/>
</dbReference>
<dbReference type="RefSeq" id="NP_706431.1">
    <property type="nucleotide sequence ID" value="NC_004337.2"/>
</dbReference>
<dbReference type="RefSeq" id="WP_001130650.1">
    <property type="nucleotide sequence ID" value="NZ_WPGW01000127.1"/>
</dbReference>
<dbReference type="SMR" id="Q83M14"/>
<dbReference type="STRING" id="198214.SF0488"/>
<dbReference type="PaxDb" id="198214-SF0488"/>
<dbReference type="GeneID" id="1023393"/>
<dbReference type="KEGG" id="sfl:SF0488"/>
<dbReference type="KEGG" id="sfx:S0496"/>
<dbReference type="PATRIC" id="fig|198214.7.peg.561"/>
<dbReference type="HOGENOM" id="CLU_044848_1_1_6"/>
<dbReference type="Proteomes" id="UP000001006">
    <property type="component" value="Chromosome"/>
</dbReference>
<dbReference type="Proteomes" id="UP000002673">
    <property type="component" value="Chromosome"/>
</dbReference>
<dbReference type="GO" id="GO:0005524">
    <property type="term" value="F:ATP binding"/>
    <property type="evidence" value="ECO:0007669"/>
    <property type="project" value="UniProtKB-KW"/>
</dbReference>
<dbReference type="GO" id="GO:0004357">
    <property type="term" value="F:glutamate-cysteine ligase activity"/>
    <property type="evidence" value="ECO:0007669"/>
    <property type="project" value="UniProtKB-EC"/>
</dbReference>
<dbReference type="GO" id="GO:0042398">
    <property type="term" value="P:modified amino acid biosynthetic process"/>
    <property type="evidence" value="ECO:0007669"/>
    <property type="project" value="InterPro"/>
</dbReference>
<dbReference type="FunFam" id="3.30.590.20:FF:000002">
    <property type="entry name" value="Putative glutamate--cysteine ligase 2"/>
    <property type="match status" value="1"/>
</dbReference>
<dbReference type="Gene3D" id="3.30.590.20">
    <property type="match status" value="1"/>
</dbReference>
<dbReference type="HAMAP" id="MF_01609">
    <property type="entry name" value="Glu_cys_ligase_2"/>
    <property type="match status" value="1"/>
</dbReference>
<dbReference type="InterPro" id="IPR050141">
    <property type="entry name" value="GCL_type2/YbdK_subfam"/>
</dbReference>
<dbReference type="InterPro" id="IPR006336">
    <property type="entry name" value="GCS2"/>
</dbReference>
<dbReference type="InterPro" id="IPR014746">
    <property type="entry name" value="Gln_synth/guanido_kin_cat_dom"/>
</dbReference>
<dbReference type="InterPro" id="IPR011793">
    <property type="entry name" value="YbdK"/>
</dbReference>
<dbReference type="NCBIfam" id="TIGR02050">
    <property type="entry name" value="gshA_cyan_rel"/>
    <property type="match status" value="1"/>
</dbReference>
<dbReference type="NCBIfam" id="NF010040">
    <property type="entry name" value="PRK13516.1"/>
    <property type="match status" value="1"/>
</dbReference>
<dbReference type="PANTHER" id="PTHR36510">
    <property type="entry name" value="GLUTAMATE--CYSTEINE LIGASE 2-RELATED"/>
    <property type="match status" value="1"/>
</dbReference>
<dbReference type="PANTHER" id="PTHR36510:SF1">
    <property type="entry name" value="GLUTAMATE--CYSTEINE LIGASE 2-RELATED"/>
    <property type="match status" value="1"/>
</dbReference>
<dbReference type="Pfam" id="PF04107">
    <property type="entry name" value="GCS2"/>
    <property type="match status" value="1"/>
</dbReference>
<dbReference type="SUPFAM" id="SSF55931">
    <property type="entry name" value="Glutamine synthetase/guanido kinase"/>
    <property type="match status" value="1"/>
</dbReference>
<keyword id="KW-0067">ATP-binding</keyword>
<keyword id="KW-0436">Ligase</keyword>
<keyword id="KW-0547">Nucleotide-binding</keyword>
<keyword id="KW-1185">Reference proteome</keyword>